<sequence>MQKQVVVMDEAAIKRALTRVSYEIIERNKGTKDLALVGIKTRGIYLAERLHTRILEIEGMDVPVGDIDITLYRDDLSYKDDDTREPAVHGTNIPFDINGKKVVLVDDVLYTGRTVRAAMDALMDVGRPAQIHLAVLADRGHRELPIRADYVGKNIPTSANERVEVRLTDVDHAEDAVIINKNE</sequence>
<proteinExistence type="inferred from homology"/>
<protein>
    <recommendedName>
        <fullName evidence="1">Bifunctional protein PyrR</fullName>
    </recommendedName>
    <domain>
        <recommendedName>
            <fullName evidence="1">Pyrimidine operon regulatory protein</fullName>
        </recommendedName>
    </domain>
    <domain>
        <recommendedName>
            <fullName evidence="1">Uracil phosphoribosyltransferase</fullName>
            <shortName evidence="1">UPRTase</shortName>
            <ecNumber evidence="1">2.4.2.9</ecNumber>
        </recommendedName>
    </domain>
</protein>
<dbReference type="EC" id="2.4.2.9" evidence="1"/>
<dbReference type="EMBL" id="AM263198">
    <property type="protein sequence ID" value="CAK21277.1"/>
    <property type="molecule type" value="Genomic_DNA"/>
</dbReference>
<dbReference type="RefSeq" id="WP_011702629.1">
    <property type="nucleotide sequence ID" value="NC_008555.1"/>
</dbReference>
<dbReference type="SMR" id="A0AJU5"/>
<dbReference type="STRING" id="386043.lwe1859"/>
<dbReference type="GeneID" id="61189760"/>
<dbReference type="KEGG" id="lwe:lwe1859"/>
<dbReference type="eggNOG" id="COG2065">
    <property type="taxonomic scope" value="Bacteria"/>
</dbReference>
<dbReference type="HOGENOM" id="CLU_094234_2_1_9"/>
<dbReference type="OrthoDB" id="9802227at2"/>
<dbReference type="Proteomes" id="UP000000779">
    <property type="component" value="Chromosome"/>
</dbReference>
<dbReference type="GO" id="GO:0003723">
    <property type="term" value="F:RNA binding"/>
    <property type="evidence" value="ECO:0007669"/>
    <property type="project" value="UniProtKB-UniRule"/>
</dbReference>
<dbReference type="GO" id="GO:0004845">
    <property type="term" value="F:uracil phosphoribosyltransferase activity"/>
    <property type="evidence" value="ECO:0007669"/>
    <property type="project" value="UniProtKB-UniRule"/>
</dbReference>
<dbReference type="GO" id="GO:0006353">
    <property type="term" value="P:DNA-templated transcription termination"/>
    <property type="evidence" value="ECO:0007669"/>
    <property type="project" value="UniProtKB-UniRule"/>
</dbReference>
<dbReference type="CDD" id="cd06223">
    <property type="entry name" value="PRTases_typeI"/>
    <property type="match status" value="1"/>
</dbReference>
<dbReference type="FunFam" id="3.40.50.2020:FF:000020">
    <property type="entry name" value="Bifunctional protein PyrR"/>
    <property type="match status" value="1"/>
</dbReference>
<dbReference type="Gene3D" id="3.40.50.2020">
    <property type="match status" value="1"/>
</dbReference>
<dbReference type="HAMAP" id="MF_01219">
    <property type="entry name" value="PyrR"/>
    <property type="match status" value="1"/>
</dbReference>
<dbReference type="InterPro" id="IPR000836">
    <property type="entry name" value="PRibTrfase_dom"/>
</dbReference>
<dbReference type="InterPro" id="IPR029057">
    <property type="entry name" value="PRTase-like"/>
</dbReference>
<dbReference type="InterPro" id="IPR023050">
    <property type="entry name" value="PyrR"/>
</dbReference>
<dbReference type="InterPro" id="IPR050137">
    <property type="entry name" value="PyrR_bifunctional"/>
</dbReference>
<dbReference type="NCBIfam" id="NF003545">
    <property type="entry name" value="PRK05205.1-1"/>
    <property type="match status" value="1"/>
</dbReference>
<dbReference type="NCBIfam" id="NF003548">
    <property type="entry name" value="PRK05205.1-4"/>
    <property type="match status" value="1"/>
</dbReference>
<dbReference type="NCBIfam" id="NF003549">
    <property type="entry name" value="PRK05205.1-5"/>
    <property type="match status" value="1"/>
</dbReference>
<dbReference type="PANTHER" id="PTHR11608">
    <property type="entry name" value="BIFUNCTIONAL PROTEIN PYRR"/>
    <property type="match status" value="1"/>
</dbReference>
<dbReference type="PANTHER" id="PTHR11608:SF0">
    <property type="entry name" value="BIFUNCTIONAL PROTEIN PYRR"/>
    <property type="match status" value="1"/>
</dbReference>
<dbReference type="Pfam" id="PF00156">
    <property type="entry name" value="Pribosyltran"/>
    <property type="match status" value="1"/>
</dbReference>
<dbReference type="SUPFAM" id="SSF53271">
    <property type="entry name" value="PRTase-like"/>
    <property type="match status" value="1"/>
</dbReference>
<organism>
    <name type="scientific">Listeria welshimeri serovar 6b (strain ATCC 35897 / DSM 20650 / CCUG 15529 / CIP 8149 / NCTC 11857 / SLCC 5334 / V8)</name>
    <dbReference type="NCBI Taxonomy" id="386043"/>
    <lineage>
        <taxon>Bacteria</taxon>
        <taxon>Bacillati</taxon>
        <taxon>Bacillota</taxon>
        <taxon>Bacilli</taxon>
        <taxon>Bacillales</taxon>
        <taxon>Listeriaceae</taxon>
        <taxon>Listeria</taxon>
    </lineage>
</organism>
<feature type="chain" id="PRO_1000053845" description="Bifunctional protein PyrR">
    <location>
        <begin position="1"/>
        <end position="183"/>
    </location>
</feature>
<feature type="short sequence motif" description="PRPP-binding" evidence="1">
    <location>
        <begin position="102"/>
        <end position="114"/>
    </location>
</feature>
<keyword id="KW-0328">Glycosyltransferase</keyword>
<keyword id="KW-0694">RNA-binding</keyword>
<keyword id="KW-0804">Transcription</keyword>
<keyword id="KW-0805">Transcription regulation</keyword>
<keyword id="KW-0806">Transcription termination</keyword>
<keyword id="KW-0808">Transferase</keyword>
<reference key="1">
    <citation type="journal article" date="2006" name="J. Bacteriol.">
        <title>Whole-genome sequence of Listeria welshimeri reveals common steps in genome reduction with Listeria innocua as compared to Listeria monocytogenes.</title>
        <authorList>
            <person name="Hain T."/>
            <person name="Steinweg C."/>
            <person name="Kuenne C.T."/>
            <person name="Billion A."/>
            <person name="Ghai R."/>
            <person name="Chatterjee S.S."/>
            <person name="Domann E."/>
            <person name="Kaerst U."/>
            <person name="Goesmann A."/>
            <person name="Bekel T."/>
            <person name="Bartels D."/>
            <person name="Kaiser O."/>
            <person name="Meyer F."/>
            <person name="Puehler A."/>
            <person name="Weisshaar B."/>
            <person name="Wehland J."/>
            <person name="Liang C."/>
            <person name="Dandekar T."/>
            <person name="Lampidis R."/>
            <person name="Kreft J."/>
            <person name="Goebel W."/>
            <person name="Chakraborty T."/>
        </authorList>
    </citation>
    <scope>NUCLEOTIDE SEQUENCE [LARGE SCALE GENOMIC DNA]</scope>
    <source>
        <strain>ATCC 35897 / DSM 20650 / CCUG 15529 / CIP 8149 / NCTC 11857 / SLCC 5334 / V8</strain>
    </source>
</reference>
<comment type="function">
    <text evidence="1">Regulates transcriptional attenuation of the pyrimidine nucleotide (pyr) operon by binding in a uridine-dependent manner to specific sites on pyr mRNA. This disrupts an antiterminator hairpin in the RNA and favors formation of a downstream transcription terminator, leading to a reduced expression of downstream genes.</text>
</comment>
<comment type="function">
    <text evidence="1">Also displays a weak uracil phosphoribosyltransferase activity which is not physiologically significant.</text>
</comment>
<comment type="catalytic activity">
    <reaction evidence="1">
        <text>UMP + diphosphate = 5-phospho-alpha-D-ribose 1-diphosphate + uracil</text>
        <dbReference type="Rhea" id="RHEA:13017"/>
        <dbReference type="ChEBI" id="CHEBI:17568"/>
        <dbReference type="ChEBI" id="CHEBI:33019"/>
        <dbReference type="ChEBI" id="CHEBI:57865"/>
        <dbReference type="ChEBI" id="CHEBI:58017"/>
        <dbReference type="EC" id="2.4.2.9"/>
    </reaction>
</comment>
<comment type="subunit">
    <text evidence="1">Homodimer and homohexamer; in equilibrium.</text>
</comment>
<comment type="similarity">
    <text evidence="1">Belongs to the purine/pyrimidine phosphoribosyltransferase family. PyrR subfamily.</text>
</comment>
<evidence type="ECO:0000255" key="1">
    <source>
        <dbReference type="HAMAP-Rule" id="MF_01219"/>
    </source>
</evidence>
<gene>
    <name evidence="1" type="primary">pyrR</name>
    <name type="ordered locus">lwe1859</name>
</gene>
<accession>A0AJU5</accession>
<name>PYRR_LISW6</name>